<name>AP2_GALME</name>
<sequence>ETESTPDYLKNIQQQLEEYTKNFNTQVQNAFDSDKIKSEVNNFIESLGKILNTEKKEAPK</sequence>
<keyword id="KW-0044">Antibiotic</keyword>
<keyword id="KW-0929">Antimicrobial</keyword>
<keyword id="KW-0903">Direct protein sequencing</keyword>
<keyword id="KW-0295">Fungicide</keyword>
<keyword id="KW-0391">Immunity</keyword>
<keyword id="KW-0399">Innate immunity</keyword>
<keyword id="KW-1185">Reference proteome</keyword>
<keyword id="KW-0964">Secreted</keyword>
<protein>
    <recommendedName>
        <fullName>Anionic antimicrobial peptide 2</fullName>
    </recommendedName>
</protein>
<reference evidence="2" key="1">
    <citation type="journal article" date="2007" name="Peptides">
        <title>Purification and characterization of eight peptides from Galleria mellonella immune hemolymph.</title>
        <authorList>
            <person name="Cytrynska M."/>
            <person name="Mak P."/>
            <person name="Zdybicka-Barabas A."/>
            <person name="Suder P."/>
            <person name="Jakubowicz T."/>
        </authorList>
    </citation>
    <scope>PROTEIN SEQUENCE</scope>
    <scope>FUNCTION</scope>
    <scope>SUBCELLULAR LOCATION</scope>
    <scope>TISSUE SPECIFICITY</scope>
    <scope>INDUCTION</scope>
    <scope>MASS SPECTROMETRY</scope>
    <source>
        <tissue evidence="1">Larval hemolymph</tissue>
    </source>
</reference>
<proteinExistence type="evidence at protein level"/>
<feature type="peptide" id="PRO_0000298765" description="Anionic antimicrobial peptide 2">
    <location>
        <begin position="1"/>
        <end position="60"/>
    </location>
</feature>
<dbReference type="SMR" id="P85216"/>
<dbReference type="EnsemblMetazoa" id="XM_026904151.2">
    <property type="protein sequence ID" value="XP_026759952.1"/>
    <property type="gene ID" value="LOC113519094"/>
</dbReference>
<dbReference type="InParanoid" id="P85216"/>
<dbReference type="OrthoDB" id="7399486at2759"/>
<dbReference type="Proteomes" id="UP000504614">
    <property type="component" value="Unplaced"/>
</dbReference>
<dbReference type="GO" id="GO:0005615">
    <property type="term" value="C:extracellular space"/>
    <property type="evidence" value="ECO:0000314"/>
    <property type="project" value="UniProtKB"/>
</dbReference>
<dbReference type="GO" id="GO:0050832">
    <property type="term" value="P:defense response to fungus"/>
    <property type="evidence" value="ECO:0000314"/>
    <property type="project" value="UniProtKB"/>
</dbReference>
<dbReference type="GO" id="GO:0050830">
    <property type="term" value="P:defense response to Gram-positive bacterium"/>
    <property type="evidence" value="ECO:0000314"/>
    <property type="project" value="UniProtKB"/>
</dbReference>
<dbReference type="GO" id="GO:0045087">
    <property type="term" value="P:innate immune response"/>
    <property type="evidence" value="ECO:0000314"/>
    <property type="project" value="UniProtKB"/>
</dbReference>
<dbReference type="GO" id="GO:0031640">
    <property type="term" value="P:killing of cells of another organism"/>
    <property type="evidence" value="ECO:0007669"/>
    <property type="project" value="UniProtKB-KW"/>
</dbReference>
<comment type="function">
    <text evidence="1">Antimicrobial protein. Has antibacterial activity against the Gram-positive bacteria M.luteus (MIC=86.6 uM), L.monocytogenes (MIC=86.6 uM), and S.lutea (MIC=86.6 uM). Lacks antibacterial activity against the Gram-positive bacteria B.circulans and S.aureus, and the Gram-negative bacteria E.coli D31, E.coli ATCC 25922, and S.typhimurium. Has antifungal activity against P.pastoris (MIC=86.6 uM) and P.stipitis (MIC=90.9 uM), but lacks antifungal activity against A.niger, C.albicans, C.albidus, C.fructus, C.wickerhamii, F.oxysporum, S.cerevisiae, S.pombe, T.harzianum, and Z.marxianus.</text>
</comment>
<comment type="subcellular location">
    <subcellularLocation>
        <location evidence="1">Secreted</location>
    </subcellularLocation>
</comment>
<comment type="tissue specificity">
    <text evidence="1">Hemolymph.</text>
</comment>
<comment type="induction">
    <text evidence="1">By bacterial infection.</text>
</comment>
<comment type="mass spectrometry"/>
<evidence type="ECO:0000269" key="1">
    <source>
    </source>
</evidence>
<evidence type="ECO:0000305" key="2"/>
<organism>
    <name type="scientific">Galleria mellonella</name>
    <name type="common">Greater wax moth</name>
    <dbReference type="NCBI Taxonomy" id="7137"/>
    <lineage>
        <taxon>Eukaryota</taxon>
        <taxon>Metazoa</taxon>
        <taxon>Ecdysozoa</taxon>
        <taxon>Arthropoda</taxon>
        <taxon>Hexapoda</taxon>
        <taxon>Insecta</taxon>
        <taxon>Pterygota</taxon>
        <taxon>Neoptera</taxon>
        <taxon>Endopterygota</taxon>
        <taxon>Lepidoptera</taxon>
        <taxon>Glossata</taxon>
        <taxon>Ditrysia</taxon>
        <taxon>Pyraloidea</taxon>
        <taxon>Pyralidae</taxon>
        <taxon>Galleriinae</taxon>
        <taxon>Galleria</taxon>
    </lineage>
</organism>
<accession>P85216</accession>